<name>CX049_BOVIN</name>
<sequence>MSSSDDEVLVWGPGFGSECGEQTSGLEAGSTAPRGPGPDPGPEPGAPQSGEGEGGDGFPDPEGFESEREVLEAGGPVLLGCEGRPGSPADDTGYVVQLSDESVAAILRQLADLDLLGIRRHMSPESHGVGDVSPLRDVEARPGSRGAAAQRCGEAARAEAGPRWVGRPRAGRAWGNPKRSTNVAVDRQWPPSVSPARLFSDSESSDECSEIQPMRVSIYPKDGGQAKLNSPKDPRDTPRHSNVQGRETLPNVPGTCLSSAPRGLISVVERQGKQGDAEQETISPPKKIQSVLWGKGGSLPSFPGVAAAAATAAAATGRLPRPSPRRKRVQEKKSLGGVSKPALGRTFPSWGRGISATPLDPATFPPISGIPLLGRSQKYASVPWGAKESKHTGAGKKSVARRARELVAATAVSGEDNDPNRDPVPKGQLATDRPWPSCPRVHHGEPSTANLSIRGGQDSGNSKPVAMNKGEVMPRGPGPSGDQKPADHHPRLKRRQQPPRRQGCPRCLVLQKEIDDLKEQLASMQYLAEKFRIL</sequence>
<reference key="1">
    <citation type="submission" date="2007-06" db="EMBL/GenBank/DDBJ databases">
        <authorList>
            <consortium name="NIH - Mammalian Gene Collection (MGC) project"/>
        </authorList>
    </citation>
    <scope>NUCLEOTIDE SEQUENCE [LARGE SCALE MRNA]</scope>
    <source>
        <strain>Crossbred X Angus</strain>
        <tissue>Liver</tissue>
    </source>
</reference>
<accession>A5PKC7</accession>
<organism>
    <name type="scientific">Bos taurus</name>
    <name type="common">Bovine</name>
    <dbReference type="NCBI Taxonomy" id="9913"/>
    <lineage>
        <taxon>Eukaryota</taxon>
        <taxon>Metazoa</taxon>
        <taxon>Chordata</taxon>
        <taxon>Craniata</taxon>
        <taxon>Vertebrata</taxon>
        <taxon>Euteleostomi</taxon>
        <taxon>Mammalia</taxon>
        <taxon>Eutheria</taxon>
        <taxon>Laurasiatheria</taxon>
        <taxon>Artiodactyla</taxon>
        <taxon>Ruminantia</taxon>
        <taxon>Pecora</taxon>
        <taxon>Bovidae</taxon>
        <taxon>Bovinae</taxon>
        <taxon>Bos</taxon>
    </lineage>
</organism>
<protein>
    <recommendedName>
        <fullName>Uncharacterized protein CXorf49 homolog</fullName>
    </recommendedName>
</protein>
<keyword id="KW-0597">Phosphoprotein</keyword>
<keyword id="KW-1185">Reference proteome</keyword>
<dbReference type="EMBL" id="BC142440">
    <property type="protein sequence ID" value="AAI42441.1"/>
    <property type="molecule type" value="mRNA"/>
</dbReference>
<dbReference type="RefSeq" id="NP_001092664.1">
    <property type="nucleotide sequence ID" value="NM_001099194.2"/>
</dbReference>
<dbReference type="SMR" id="A5PKC7"/>
<dbReference type="FunCoup" id="A5PKC7">
    <property type="interactions" value="6"/>
</dbReference>
<dbReference type="PaxDb" id="9913-ENSBTAP00000054976"/>
<dbReference type="Ensembl" id="ENSBTAT00000086001.1">
    <property type="protein sequence ID" value="ENSBTAP00000068571.1"/>
    <property type="gene ID" value="ENSBTAG00000048569.2"/>
</dbReference>
<dbReference type="GeneID" id="785476"/>
<dbReference type="KEGG" id="bta:785476"/>
<dbReference type="VEuPathDB" id="HostDB:ENSBTAG00000048569"/>
<dbReference type="eggNOG" id="KOG3544">
    <property type="taxonomic scope" value="Eukaryota"/>
</dbReference>
<dbReference type="GeneTree" id="ENSGT00390000015252"/>
<dbReference type="InParanoid" id="A5PKC7"/>
<dbReference type="OMA" id="ALNPCPG"/>
<dbReference type="OrthoDB" id="9715898at2759"/>
<dbReference type="Proteomes" id="UP000009136">
    <property type="component" value="Unassembled WGS sequence"/>
</dbReference>
<dbReference type="Bgee" id="ENSBTAG00000048569">
    <property type="expression patterns" value="Expressed in testis and 5 other cell types or tissues"/>
</dbReference>
<dbReference type="InterPro" id="IPR027822">
    <property type="entry name" value="DUF4641"/>
</dbReference>
<dbReference type="PANTHER" id="PTHR31866">
    <property type="entry name" value="GENE 4779-RELATED"/>
    <property type="match status" value="1"/>
</dbReference>
<dbReference type="PANTHER" id="PTHR31866:SF1">
    <property type="entry name" value="GENE 4779-RELATED"/>
    <property type="match status" value="1"/>
</dbReference>
<dbReference type="Pfam" id="PF15483">
    <property type="entry name" value="DUF4641"/>
    <property type="match status" value="1"/>
</dbReference>
<feature type="chain" id="PRO_0000343894" description="Uncharacterized protein CXorf49 homolog">
    <location>
        <begin position="1"/>
        <end position="534"/>
    </location>
</feature>
<feature type="region of interest" description="Disordered" evidence="2">
    <location>
        <begin position="1"/>
        <end position="93"/>
    </location>
</feature>
<feature type="region of interest" description="Disordered" evidence="2">
    <location>
        <begin position="123"/>
        <end position="260"/>
    </location>
</feature>
<feature type="region of interest" description="Disordered" evidence="2">
    <location>
        <begin position="313"/>
        <end position="349"/>
    </location>
</feature>
<feature type="region of interest" description="Disordered" evidence="2">
    <location>
        <begin position="383"/>
        <end position="505"/>
    </location>
</feature>
<feature type="compositionally biased region" description="Pro residues" evidence="2">
    <location>
        <begin position="35"/>
        <end position="45"/>
    </location>
</feature>
<feature type="compositionally biased region" description="Low complexity" evidence="2">
    <location>
        <begin position="145"/>
        <end position="161"/>
    </location>
</feature>
<feature type="compositionally biased region" description="Basic and acidic residues" evidence="2">
    <location>
        <begin position="230"/>
        <end position="239"/>
    </location>
</feature>
<feature type="modified residue" description="Phosphoserine" evidence="1">
    <location>
        <position position="87"/>
    </location>
</feature>
<feature type="modified residue" description="Phosphoserine" evidence="1">
    <location>
        <position position="123"/>
    </location>
</feature>
<proteinExistence type="evidence at transcript level"/>
<evidence type="ECO:0000250" key="1">
    <source>
        <dbReference type="UniProtKB" id="Q9D454"/>
    </source>
</evidence>
<evidence type="ECO:0000256" key="2">
    <source>
        <dbReference type="SAM" id="MobiDB-lite"/>
    </source>
</evidence>